<keyword id="KW-0472">Membrane</keyword>
<keyword id="KW-1185">Reference proteome</keyword>
<keyword id="KW-0808">Transferase</keyword>
<keyword id="KW-0812">Transmembrane</keyword>
<keyword id="KW-1133">Transmembrane helix</keyword>
<organism>
    <name type="scientific">Dictyostelium discoideum</name>
    <name type="common">Social amoeba</name>
    <dbReference type="NCBI Taxonomy" id="44689"/>
    <lineage>
        <taxon>Eukaryota</taxon>
        <taxon>Amoebozoa</taxon>
        <taxon>Evosea</taxon>
        <taxon>Eumycetozoa</taxon>
        <taxon>Dictyostelia</taxon>
        <taxon>Dictyosteliales</taxon>
        <taxon>Dictyosteliaceae</taxon>
        <taxon>Dictyostelium</taxon>
    </lineage>
</organism>
<gene>
    <name type="primary">captA</name>
    <name type="ORF">DDB_G0271794</name>
</gene>
<accession>Q55AQ3</accession>
<accession>Q75JA9</accession>
<evidence type="ECO:0000255" key="1"/>
<evidence type="ECO:0000305" key="2"/>
<protein>
    <recommendedName>
        <fullName>Uncharacterized CDP-alcohol phosphatidyltransferase class-I family protein 1</fullName>
    </recommendedName>
</protein>
<proteinExistence type="inferred from homology"/>
<reference key="1">
    <citation type="journal article" date="2002" name="Nature">
        <title>Sequence and analysis of chromosome 2 of Dictyostelium discoideum.</title>
        <authorList>
            <person name="Gloeckner G."/>
            <person name="Eichinger L."/>
            <person name="Szafranski K."/>
            <person name="Pachebat J.A."/>
            <person name="Bankier A.T."/>
            <person name="Dear P.H."/>
            <person name="Lehmann R."/>
            <person name="Baumgart C."/>
            <person name="Parra G."/>
            <person name="Abril J.F."/>
            <person name="Guigo R."/>
            <person name="Kumpf K."/>
            <person name="Tunggal B."/>
            <person name="Cox E.C."/>
            <person name="Quail M.A."/>
            <person name="Platzer M."/>
            <person name="Rosenthal A."/>
            <person name="Noegel A.A."/>
        </authorList>
    </citation>
    <scope>NUCLEOTIDE SEQUENCE [LARGE SCALE GENOMIC DNA]</scope>
    <source>
        <strain>AX4</strain>
    </source>
</reference>
<reference key="2">
    <citation type="journal article" date="2005" name="Nature">
        <title>The genome of the social amoeba Dictyostelium discoideum.</title>
        <authorList>
            <person name="Eichinger L."/>
            <person name="Pachebat J.A."/>
            <person name="Gloeckner G."/>
            <person name="Rajandream M.A."/>
            <person name="Sucgang R."/>
            <person name="Berriman M."/>
            <person name="Song J."/>
            <person name="Olsen R."/>
            <person name="Szafranski K."/>
            <person name="Xu Q."/>
            <person name="Tunggal B."/>
            <person name="Kummerfeld S."/>
            <person name="Madera M."/>
            <person name="Konfortov B.A."/>
            <person name="Rivero F."/>
            <person name="Bankier A.T."/>
            <person name="Lehmann R."/>
            <person name="Hamlin N."/>
            <person name="Davies R."/>
            <person name="Gaudet P."/>
            <person name="Fey P."/>
            <person name="Pilcher K."/>
            <person name="Chen G."/>
            <person name="Saunders D."/>
            <person name="Sodergren E.J."/>
            <person name="Davis P."/>
            <person name="Kerhornou A."/>
            <person name="Nie X."/>
            <person name="Hall N."/>
            <person name="Anjard C."/>
            <person name="Hemphill L."/>
            <person name="Bason N."/>
            <person name="Farbrother P."/>
            <person name="Desany B."/>
            <person name="Just E."/>
            <person name="Morio T."/>
            <person name="Rost R."/>
            <person name="Churcher C.M."/>
            <person name="Cooper J."/>
            <person name="Haydock S."/>
            <person name="van Driessche N."/>
            <person name="Cronin A."/>
            <person name="Goodhead I."/>
            <person name="Muzny D.M."/>
            <person name="Mourier T."/>
            <person name="Pain A."/>
            <person name="Lu M."/>
            <person name="Harper D."/>
            <person name="Lindsay R."/>
            <person name="Hauser H."/>
            <person name="James K.D."/>
            <person name="Quiles M."/>
            <person name="Madan Babu M."/>
            <person name="Saito T."/>
            <person name="Buchrieser C."/>
            <person name="Wardroper A."/>
            <person name="Felder M."/>
            <person name="Thangavelu M."/>
            <person name="Johnson D."/>
            <person name="Knights A."/>
            <person name="Loulseged H."/>
            <person name="Mungall K.L."/>
            <person name="Oliver K."/>
            <person name="Price C."/>
            <person name="Quail M.A."/>
            <person name="Urushihara H."/>
            <person name="Hernandez J."/>
            <person name="Rabbinowitsch E."/>
            <person name="Steffen D."/>
            <person name="Sanders M."/>
            <person name="Ma J."/>
            <person name="Kohara Y."/>
            <person name="Sharp S."/>
            <person name="Simmonds M.N."/>
            <person name="Spiegler S."/>
            <person name="Tivey A."/>
            <person name="Sugano S."/>
            <person name="White B."/>
            <person name="Walker D."/>
            <person name="Woodward J.R."/>
            <person name="Winckler T."/>
            <person name="Tanaka Y."/>
            <person name="Shaulsky G."/>
            <person name="Schleicher M."/>
            <person name="Weinstock G.M."/>
            <person name="Rosenthal A."/>
            <person name="Cox E.C."/>
            <person name="Chisholm R.L."/>
            <person name="Gibbs R.A."/>
            <person name="Loomis W.F."/>
            <person name="Platzer M."/>
            <person name="Kay R.R."/>
            <person name="Williams J.G."/>
            <person name="Dear P.H."/>
            <person name="Noegel A.A."/>
            <person name="Barrell B.G."/>
            <person name="Kuspa A."/>
        </authorList>
    </citation>
    <scope>NUCLEOTIDE SEQUENCE [LARGE SCALE GENOMIC DNA]</scope>
    <source>
        <strain>AX4</strain>
    </source>
</reference>
<comment type="subcellular location">
    <subcellularLocation>
        <location evidence="2">Membrane</location>
        <topology evidence="2">Multi-pass membrane protein</topology>
    </subcellularLocation>
</comment>
<comment type="similarity">
    <text evidence="2">Belongs to the CDP-alcohol phosphatidyltransferase class-I family.</text>
</comment>
<feature type="chain" id="PRO_0000342198" description="Uncharacterized CDP-alcohol phosphatidyltransferase class-I family protein 1">
    <location>
        <begin position="1"/>
        <end position="381"/>
    </location>
</feature>
<feature type="transmembrane region" description="Helical" evidence="1">
    <location>
        <begin position="59"/>
        <end position="79"/>
    </location>
</feature>
<feature type="transmembrane region" description="Helical" evidence="1">
    <location>
        <begin position="84"/>
        <end position="104"/>
    </location>
</feature>
<feature type="transmembrane region" description="Helical" evidence="1">
    <location>
        <begin position="147"/>
        <end position="167"/>
    </location>
</feature>
<feature type="transmembrane region" description="Helical" evidence="1">
    <location>
        <begin position="190"/>
        <end position="210"/>
    </location>
</feature>
<feature type="transmembrane region" description="Helical" evidence="1">
    <location>
        <begin position="222"/>
        <end position="242"/>
    </location>
</feature>
<feature type="transmembrane region" description="Helical" evidence="1">
    <location>
        <begin position="250"/>
        <end position="270"/>
    </location>
</feature>
<feature type="transmembrane region" description="Helical" evidence="1">
    <location>
        <begin position="284"/>
        <end position="304"/>
    </location>
</feature>
<feature type="transmembrane region" description="Helical" evidence="1">
    <location>
        <begin position="311"/>
        <end position="331"/>
    </location>
</feature>
<feature type="transmembrane region" description="Helical" evidence="1">
    <location>
        <begin position="344"/>
        <end position="364"/>
    </location>
</feature>
<name>CAPTA_DICDI</name>
<dbReference type="EMBL" id="AAFI02000006">
    <property type="protein sequence ID" value="EAL71587.1"/>
    <property type="molecule type" value="Genomic_DNA"/>
</dbReference>
<dbReference type="RefSeq" id="XP_645469.1">
    <property type="nucleotide sequence ID" value="XM_640377.1"/>
</dbReference>
<dbReference type="SMR" id="Q55AQ3"/>
<dbReference type="FunCoup" id="Q55AQ3">
    <property type="interactions" value="5"/>
</dbReference>
<dbReference type="STRING" id="44689.Q55AQ3"/>
<dbReference type="PaxDb" id="44689-DDB0266712"/>
<dbReference type="EnsemblProtists" id="EAL71587">
    <property type="protein sequence ID" value="EAL71587"/>
    <property type="gene ID" value="DDB_G0271794"/>
</dbReference>
<dbReference type="GeneID" id="8618097"/>
<dbReference type="KEGG" id="ddi:DDB_G0271794"/>
<dbReference type="dictyBase" id="DDB_G0271794">
    <property type="gene designation" value="captA"/>
</dbReference>
<dbReference type="VEuPathDB" id="AmoebaDB:DDB_G0271794"/>
<dbReference type="eggNOG" id="KOG2877">
    <property type="taxonomic scope" value="Eukaryota"/>
</dbReference>
<dbReference type="HOGENOM" id="CLU_035066_5_0_1"/>
<dbReference type="InParanoid" id="Q55AQ3"/>
<dbReference type="OMA" id="VWQKPFL"/>
<dbReference type="PhylomeDB" id="Q55AQ3"/>
<dbReference type="Reactome" id="R-DDI-1483191">
    <property type="pathway name" value="Synthesis of PC"/>
</dbReference>
<dbReference type="Reactome" id="R-DDI-1483213">
    <property type="pathway name" value="Synthesis of PE"/>
</dbReference>
<dbReference type="PRO" id="PR:Q55AQ3"/>
<dbReference type="Proteomes" id="UP000002195">
    <property type="component" value="Chromosome 2"/>
</dbReference>
<dbReference type="GO" id="GO:0016020">
    <property type="term" value="C:membrane"/>
    <property type="evidence" value="ECO:0007669"/>
    <property type="project" value="UniProtKB-SubCell"/>
</dbReference>
<dbReference type="GO" id="GO:0016780">
    <property type="term" value="F:phosphotransferase activity, for other substituted phosphate groups"/>
    <property type="evidence" value="ECO:0007669"/>
    <property type="project" value="InterPro"/>
</dbReference>
<dbReference type="GO" id="GO:0008654">
    <property type="term" value="P:phospholipid biosynthetic process"/>
    <property type="evidence" value="ECO:0007669"/>
    <property type="project" value="InterPro"/>
</dbReference>
<dbReference type="FunFam" id="1.20.120.1760:FF:000015">
    <property type="entry name" value="CDP-alcohol phosphatidyltransferase family protein"/>
    <property type="match status" value="1"/>
</dbReference>
<dbReference type="Gene3D" id="1.20.120.1760">
    <property type="match status" value="1"/>
</dbReference>
<dbReference type="InterPro" id="IPR000462">
    <property type="entry name" value="CDP-OH_P_trans"/>
</dbReference>
<dbReference type="InterPro" id="IPR043130">
    <property type="entry name" value="CDP-OH_PTrfase_TM_dom"/>
</dbReference>
<dbReference type="InterPro" id="IPR048254">
    <property type="entry name" value="CDP_ALCOHOL_P_TRANSF_CS"/>
</dbReference>
<dbReference type="InterPro" id="IPR014472">
    <property type="entry name" value="CHOPT"/>
</dbReference>
<dbReference type="PANTHER" id="PTHR10414:SF30">
    <property type="entry name" value="CDP-ALCOHOL PHOSPHATIDYLTRANSFERASE"/>
    <property type="match status" value="1"/>
</dbReference>
<dbReference type="PANTHER" id="PTHR10414">
    <property type="entry name" value="ETHANOLAMINEPHOSPHOTRANSFERASE"/>
    <property type="match status" value="1"/>
</dbReference>
<dbReference type="Pfam" id="PF01066">
    <property type="entry name" value="CDP-OH_P_transf"/>
    <property type="match status" value="1"/>
</dbReference>
<dbReference type="PIRSF" id="PIRSF015665">
    <property type="entry name" value="CHOPT"/>
    <property type="match status" value="1"/>
</dbReference>
<dbReference type="PROSITE" id="PS00379">
    <property type="entry name" value="CDP_ALCOHOL_P_TRANSF"/>
    <property type="match status" value="1"/>
</dbReference>
<sequence length="381" mass="43937">MNTNNKNDFKSVYVSSRARDNILKYKYTGCDSSFISIHIMNHFWNWFVNLFPRSFAPNLITLFGFISIIVSYFVTLYYMDRMNGVAPKWLYLFNALCIFIYQTMDACDGKQARRVQASSGLGELFDHGCDAMITYLVMQTFQSSLQVGVNQISFFTTLWIMYVFFMAQLEQYSTGVMNLGHFGPTESQFSMMAGHIFTFFYGEQFWFNTIKFESFEIQYNHLVLLVVILGGVGTILLNTFSILKNGNESILTNIINLVPISILLGVSIYWGKYSTVNIFETAPHYFMGIFGILFALVTGKLILARICMDKLSPIQLIMLPLIAVILNIYKFNGELFDEILFTKVYFFVVFIVYIHFAYDVVTSLTKVLDIYCFTLKNKKQT</sequence>